<evidence type="ECO:0000255" key="1">
    <source>
        <dbReference type="HAMAP-Rule" id="MF_01398"/>
    </source>
</evidence>
<reference key="1">
    <citation type="journal article" date="2007" name="Am. Fern J.">
        <title>The complete plastid genome sequence of Angiopteris evecta (G. Forst.) Hoffm. (Marattiaceae).</title>
        <authorList>
            <person name="Roper J.M."/>
            <person name="Hansen S.K."/>
            <person name="Wolf P.G."/>
            <person name="Karol K.G."/>
            <person name="Mandoli D.F."/>
            <person name="Everett K.D.E."/>
            <person name="Kuehl J."/>
            <person name="Boore J.L."/>
        </authorList>
    </citation>
    <scope>NUCLEOTIDE SEQUENCE [LARGE SCALE GENOMIC DNA]</scope>
</reference>
<organism>
    <name type="scientific">Angiopteris evecta</name>
    <name type="common">Mule's foot fern</name>
    <name type="synonym">Polypodium evectum</name>
    <dbReference type="NCBI Taxonomy" id="13825"/>
    <lineage>
        <taxon>Eukaryota</taxon>
        <taxon>Viridiplantae</taxon>
        <taxon>Streptophyta</taxon>
        <taxon>Embryophyta</taxon>
        <taxon>Tracheophyta</taxon>
        <taxon>Polypodiopsida</taxon>
        <taxon>Marattiidae</taxon>
        <taxon>Marattiales</taxon>
        <taxon>Marattiaceae</taxon>
        <taxon>Angiopteris</taxon>
    </lineage>
</organism>
<geneLocation type="chloroplast"/>
<name>ATPF_ANGEV</name>
<gene>
    <name evidence="1" type="primary">atpF</name>
</gene>
<feature type="chain" id="PRO_0000368905" description="ATP synthase subunit b, chloroplastic">
    <location>
        <begin position="1"/>
        <end position="187"/>
    </location>
</feature>
<feature type="transmembrane region" description="Helical" evidence="1">
    <location>
        <begin position="29"/>
        <end position="49"/>
    </location>
</feature>
<protein>
    <recommendedName>
        <fullName evidence="1">ATP synthase subunit b, chloroplastic</fullName>
    </recommendedName>
    <alternativeName>
        <fullName evidence="1">ATP synthase F(0) sector subunit b</fullName>
    </alternativeName>
    <alternativeName>
        <fullName evidence="1">ATPase subunit I</fullName>
    </alternativeName>
</protein>
<comment type="function">
    <text evidence="1">F(1)F(0) ATP synthase produces ATP from ADP in the presence of a proton or sodium gradient. F-type ATPases consist of two structural domains, F(1) containing the extramembraneous catalytic core and F(0) containing the membrane proton channel, linked together by a central stalk and a peripheral stalk. During catalysis, ATP synthesis in the catalytic domain of F(1) is coupled via a rotary mechanism of the central stalk subunits to proton translocation.</text>
</comment>
<comment type="function">
    <text evidence="1">Component of the F(0) channel, it forms part of the peripheral stalk, linking F(1) to F(0).</text>
</comment>
<comment type="subunit">
    <text evidence="1">F-type ATPases have 2 components, F(1) - the catalytic core - and F(0) - the membrane proton channel. F(1) has five subunits: alpha(3), beta(3), gamma(1), delta(1), epsilon(1). F(0) has four main subunits: a(1), b(1), b'(1) and c(10-14). The alpha and beta chains form an alternating ring which encloses part of the gamma chain. F(1) is attached to F(0) by a central stalk formed by the gamma and epsilon chains, while a peripheral stalk is formed by the delta, b and b' chains.</text>
</comment>
<comment type="subcellular location">
    <subcellularLocation>
        <location evidence="1">Plastid</location>
        <location evidence="1">Chloroplast thylakoid membrane</location>
        <topology evidence="1">Single-pass membrane protein</topology>
    </subcellularLocation>
</comment>
<comment type="miscellaneous">
    <text>In plastids the F-type ATPase is also known as CF(1)CF(0).</text>
</comment>
<comment type="similarity">
    <text evidence="1">Belongs to the ATPase B chain family.</text>
</comment>
<sequence>MIHLNILYWPPAGGFGLNTNILEINIINLAVVLGVLIYLGKGVCAGCILNDLLENRKQTILSTIHDAEERYEEATEKLNQARTRLQQAKVKADEIRVNGLTQMEREKQDLINAADEDSRRLEDSKNSTIRFEEQRAIEQVRQQVSRLALERALESLNTRLNNELHSRMIDYHIGLLRAMESTTDQFL</sequence>
<dbReference type="EMBL" id="DQ821119">
    <property type="protein sequence ID" value="ABG79585.1"/>
    <property type="molecule type" value="Genomic_DNA"/>
</dbReference>
<dbReference type="RefSeq" id="YP_001023686.1">
    <property type="nucleotide sequence ID" value="NC_008829.1"/>
</dbReference>
<dbReference type="SMR" id="A2T318"/>
<dbReference type="GeneID" id="4788196"/>
<dbReference type="GO" id="GO:0009535">
    <property type="term" value="C:chloroplast thylakoid membrane"/>
    <property type="evidence" value="ECO:0007669"/>
    <property type="project" value="UniProtKB-SubCell"/>
</dbReference>
<dbReference type="GO" id="GO:0045259">
    <property type="term" value="C:proton-transporting ATP synthase complex"/>
    <property type="evidence" value="ECO:0007669"/>
    <property type="project" value="UniProtKB-KW"/>
</dbReference>
<dbReference type="GO" id="GO:0046933">
    <property type="term" value="F:proton-transporting ATP synthase activity, rotational mechanism"/>
    <property type="evidence" value="ECO:0007669"/>
    <property type="project" value="UniProtKB-UniRule"/>
</dbReference>
<dbReference type="CDD" id="cd06503">
    <property type="entry name" value="ATP-synt_Fo_b"/>
    <property type="match status" value="1"/>
</dbReference>
<dbReference type="HAMAP" id="MF_01398">
    <property type="entry name" value="ATP_synth_b_bprime"/>
    <property type="match status" value="1"/>
</dbReference>
<dbReference type="InterPro" id="IPR002146">
    <property type="entry name" value="ATP_synth_b/b'su_bac/chlpt"/>
</dbReference>
<dbReference type="NCBIfam" id="NF005606">
    <property type="entry name" value="PRK07352.1"/>
    <property type="match status" value="1"/>
</dbReference>
<dbReference type="PANTHER" id="PTHR34264">
    <property type="entry name" value="ATP SYNTHASE SUBUNIT B, CHLOROPLASTIC"/>
    <property type="match status" value="1"/>
</dbReference>
<dbReference type="PANTHER" id="PTHR34264:SF3">
    <property type="entry name" value="ATP SYNTHASE SUBUNIT B, CHLOROPLASTIC"/>
    <property type="match status" value="1"/>
</dbReference>
<dbReference type="Pfam" id="PF00430">
    <property type="entry name" value="ATP-synt_B"/>
    <property type="match status" value="1"/>
</dbReference>
<proteinExistence type="inferred from homology"/>
<keyword id="KW-0066">ATP synthesis</keyword>
<keyword id="KW-0138">CF(0)</keyword>
<keyword id="KW-0150">Chloroplast</keyword>
<keyword id="KW-0375">Hydrogen ion transport</keyword>
<keyword id="KW-0406">Ion transport</keyword>
<keyword id="KW-0472">Membrane</keyword>
<keyword id="KW-0934">Plastid</keyword>
<keyword id="KW-0793">Thylakoid</keyword>
<keyword id="KW-0812">Transmembrane</keyword>
<keyword id="KW-1133">Transmembrane helix</keyword>
<keyword id="KW-0813">Transport</keyword>
<accession>A2T318</accession>